<accession>C4ZRB8</accession>
<evidence type="ECO:0000255" key="1">
    <source>
        <dbReference type="HAMAP-Rule" id="MF_00001"/>
    </source>
</evidence>
<dbReference type="EC" id="2.1.3.2" evidence="1"/>
<dbReference type="EMBL" id="CP001396">
    <property type="protein sequence ID" value="ACR62022.1"/>
    <property type="molecule type" value="Genomic_DNA"/>
</dbReference>
<dbReference type="RefSeq" id="WP_000013046.1">
    <property type="nucleotide sequence ID" value="NC_012759.1"/>
</dbReference>
<dbReference type="SMR" id="C4ZRB8"/>
<dbReference type="GeneID" id="93777579"/>
<dbReference type="KEGG" id="ebw:BWG_3953"/>
<dbReference type="HOGENOM" id="CLU_043846_1_2_6"/>
<dbReference type="UniPathway" id="UPA00070">
    <property type="reaction ID" value="UER00116"/>
</dbReference>
<dbReference type="GO" id="GO:0005829">
    <property type="term" value="C:cytosol"/>
    <property type="evidence" value="ECO:0007669"/>
    <property type="project" value="TreeGrafter"/>
</dbReference>
<dbReference type="GO" id="GO:0016597">
    <property type="term" value="F:amino acid binding"/>
    <property type="evidence" value="ECO:0007669"/>
    <property type="project" value="InterPro"/>
</dbReference>
<dbReference type="GO" id="GO:0004070">
    <property type="term" value="F:aspartate carbamoyltransferase activity"/>
    <property type="evidence" value="ECO:0007669"/>
    <property type="project" value="UniProtKB-UniRule"/>
</dbReference>
<dbReference type="GO" id="GO:0006207">
    <property type="term" value="P:'de novo' pyrimidine nucleobase biosynthetic process"/>
    <property type="evidence" value="ECO:0007669"/>
    <property type="project" value="InterPro"/>
</dbReference>
<dbReference type="GO" id="GO:0044205">
    <property type="term" value="P:'de novo' UMP biosynthetic process"/>
    <property type="evidence" value="ECO:0007669"/>
    <property type="project" value="UniProtKB-UniRule"/>
</dbReference>
<dbReference type="GO" id="GO:0006520">
    <property type="term" value="P:amino acid metabolic process"/>
    <property type="evidence" value="ECO:0007669"/>
    <property type="project" value="InterPro"/>
</dbReference>
<dbReference type="FunFam" id="3.40.50.1370:FF:000001">
    <property type="entry name" value="Aspartate carbamoyltransferase"/>
    <property type="match status" value="1"/>
</dbReference>
<dbReference type="FunFam" id="3.40.50.1370:FF:000002">
    <property type="entry name" value="Aspartate carbamoyltransferase 2"/>
    <property type="match status" value="1"/>
</dbReference>
<dbReference type="Gene3D" id="3.40.50.1370">
    <property type="entry name" value="Aspartate/ornithine carbamoyltransferase"/>
    <property type="match status" value="2"/>
</dbReference>
<dbReference type="HAMAP" id="MF_00001">
    <property type="entry name" value="Asp_carb_tr"/>
    <property type="match status" value="1"/>
</dbReference>
<dbReference type="InterPro" id="IPR006132">
    <property type="entry name" value="Asp/Orn_carbamoyltranf_P-bd"/>
</dbReference>
<dbReference type="InterPro" id="IPR006130">
    <property type="entry name" value="Asp/Orn_carbamoylTrfase"/>
</dbReference>
<dbReference type="InterPro" id="IPR036901">
    <property type="entry name" value="Asp/Orn_carbamoylTrfase_sf"/>
</dbReference>
<dbReference type="InterPro" id="IPR002082">
    <property type="entry name" value="Asp_carbamoyltransf"/>
</dbReference>
<dbReference type="InterPro" id="IPR006131">
    <property type="entry name" value="Asp_carbamoyltransf_Asp/Orn-bd"/>
</dbReference>
<dbReference type="NCBIfam" id="TIGR00670">
    <property type="entry name" value="asp_carb_tr"/>
    <property type="match status" value="1"/>
</dbReference>
<dbReference type="NCBIfam" id="NF002032">
    <property type="entry name" value="PRK00856.1"/>
    <property type="match status" value="1"/>
</dbReference>
<dbReference type="PANTHER" id="PTHR45753:SF6">
    <property type="entry name" value="ASPARTATE CARBAMOYLTRANSFERASE"/>
    <property type="match status" value="1"/>
</dbReference>
<dbReference type="PANTHER" id="PTHR45753">
    <property type="entry name" value="ORNITHINE CARBAMOYLTRANSFERASE, MITOCHONDRIAL"/>
    <property type="match status" value="1"/>
</dbReference>
<dbReference type="Pfam" id="PF00185">
    <property type="entry name" value="OTCace"/>
    <property type="match status" value="1"/>
</dbReference>
<dbReference type="Pfam" id="PF02729">
    <property type="entry name" value="OTCace_N"/>
    <property type="match status" value="1"/>
</dbReference>
<dbReference type="PRINTS" id="PR00100">
    <property type="entry name" value="AOTCASE"/>
</dbReference>
<dbReference type="PRINTS" id="PR00101">
    <property type="entry name" value="ATCASE"/>
</dbReference>
<dbReference type="SUPFAM" id="SSF53671">
    <property type="entry name" value="Aspartate/ornithine carbamoyltransferase"/>
    <property type="match status" value="1"/>
</dbReference>
<dbReference type="PROSITE" id="PS00097">
    <property type="entry name" value="CARBAMOYLTRANSFERASE"/>
    <property type="match status" value="1"/>
</dbReference>
<sequence>MANPLYQKHIISINDLSRDDLNLVLATAAKLKANPQPELLKHKVIASCFFEASTRTRLSFETSMHRLGASVVGFSDSANTSLGKKGETLADTISVISTYVDAIVMRHPQEGAARLATEFSGNVPVLNAGDGSNQHPTQTLLDLFTIQETQGRLDNLHVAMVGDLKYGRTVHSLTQALAKFDGNRFYFIAPDALAMPQYILDMLDEKGIAWSLHSSIEEVMAEVDILYMTRVQKERLDPSEYANVKAQFVLRASDLHNAKANMKVLHPLPRVDEIATDVDKTPHAWYFQQAGNGIFARQALLALVLNRDLVL</sequence>
<protein>
    <recommendedName>
        <fullName evidence="1">Aspartate carbamoyltransferase catalytic subunit</fullName>
        <ecNumber evidence="1">2.1.3.2</ecNumber>
    </recommendedName>
    <alternativeName>
        <fullName evidence="1">Aspartate transcarbamylase</fullName>
        <shortName evidence="1">ATCase</shortName>
    </alternativeName>
</protein>
<feature type="chain" id="PRO_1000201590" description="Aspartate carbamoyltransferase catalytic subunit">
    <location>
        <begin position="1"/>
        <end position="311"/>
    </location>
</feature>
<feature type="binding site" evidence="1">
    <location>
        <position position="55"/>
    </location>
    <ligand>
        <name>carbamoyl phosphate</name>
        <dbReference type="ChEBI" id="CHEBI:58228"/>
    </ligand>
</feature>
<feature type="binding site" evidence="1">
    <location>
        <position position="56"/>
    </location>
    <ligand>
        <name>carbamoyl phosphate</name>
        <dbReference type="ChEBI" id="CHEBI:58228"/>
    </ligand>
</feature>
<feature type="binding site" evidence="1">
    <location>
        <position position="85"/>
    </location>
    <ligand>
        <name>L-aspartate</name>
        <dbReference type="ChEBI" id="CHEBI:29991"/>
    </ligand>
</feature>
<feature type="binding site" evidence="1">
    <location>
        <position position="106"/>
    </location>
    <ligand>
        <name>carbamoyl phosphate</name>
        <dbReference type="ChEBI" id="CHEBI:58228"/>
    </ligand>
</feature>
<feature type="binding site" evidence="1">
    <location>
        <position position="135"/>
    </location>
    <ligand>
        <name>carbamoyl phosphate</name>
        <dbReference type="ChEBI" id="CHEBI:58228"/>
    </ligand>
</feature>
<feature type="binding site" evidence="1">
    <location>
        <position position="138"/>
    </location>
    <ligand>
        <name>carbamoyl phosphate</name>
        <dbReference type="ChEBI" id="CHEBI:58228"/>
    </ligand>
</feature>
<feature type="binding site" evidence="1">
    <location>
        <position position="168"/>
    </location>
    <ligand>
        <name>L-aspartate</name>
        <dbReference type="ChEBI" id="CHEBI:29991"/>
    </ligand>
</feature>
<feature type="binding site" evidence="1">
    <location>
        <position position="230"/>
    </location>
    <ligand>
        <name>L-aspartate</name>
        <dbReference type="ChEBI" id="CHEBI:29991"/>
    </ligand>
</feature>
<feature type="binding site" evidence="1">
    <location>
        <position position="268"/>
    </location>
    <ligand>
        <name>carbamoyl phosphate</name>
        <dbReference type="ChEBI" id="CHEBI:58228"/>
    </ligand>
</feature>
<feature type="binding site" evidence="1">
    <location>
        <position position="269"/>
    </location>
    <ligand>
        <name>carbamoyl phosphate</name>
        <dbReference type="ChEBI" id="CHEBI:58228"/>
    </ligand>
</feature>
<gene>
    <name evidence="1" type="primary">pyrB</name>
    <name type="ordered locus">BWG_3953</name>
</gene>
<keyword id="KW-0665">Pyrimidine biosynthesis</keyword>
<keyword id="KW-0808">Transferase</keyword>
<comment type="function">
    <text evidence="1">Catalyzes the condensation of carbamoyl phosphate and aspartate to form carbamoyl aspartate and inorganic phosphate, the committed step in the de novo pyrimidine nucleotide biosynthesis pathway.</text>
</comment>
<comment type="catalytic activity">
    <reaction evidence="1">
        <text>carbamoyl phosphate + L-aspartate = N-carbamoyl-L-aspartate + phosphate + H(+)</text>
        <dbReference type="Rhea" id="RHEA:20013"/>
        <dbReference type="ChEBI" id="CHEBI:15378"/>
        <dbReference type="ChEBI" id="CHEBI:29991"/>
        <dbReference type="ChEBI" id="CHEBI:32814"/>
        <dbReference type="ChEBI" id="CHEBI:43474"/>
        <dbReference type="ChEBI" id="CHEBI:58228"/>
        <dbReference type="EC" id="2.1.3.2"/>
    </reaction>
</comment>
<comment type="pathway">
    <text evidence="1">Pyrimidine metabolism; UMP biosynthesis via de novo pathway; (S)-dihydroorotate from bicarbonate: step 2/3.</text>
</comment>
<comment type="subunit">
    <text evidence="1">Heterododecamer (2C3:3R2) of six catalytic PyrB chains organized as two trimers (C3), and six regulatory PyrI chains organized as three dimers (R2).</text>
</comment>
<comment type="similarity">
    <text evidence="1">Belongs to the aspartate/ornithine carbamoyltransferase superfamily. ATCase family.</text>
</comment>
<proteinExistence type="inferred from homology"/>
<reference key="1">
    <citation type="journal article" date="2009" name="J. Bacteriol.">
        <title>Genomic sequencing reveals regulatory mutations and recombinational events in the widely used MC4100 lineage of Escherichia coli K-12.</title>
        <authorList>
            <person name="Ferenci T."/>
            <person name="Zhou Z."/>
            <person name="Betteridge T."/>
            <person name="Ren Y."/>
            <person name="Liu Y."/>
            <person name="Feng L."/>
            <person name="Reeves P.R."/>
            <person name="Wang L."/>
        </authorList>
    </citation>
    <scope>NUCLEOTIDE SEQUENCE [LARGE SCALE GENOMIC DNA]</scope>
    <source>
        <strain>K12 / MC4100 / BW2952</strain>
    </source>
</reference>
<name>PYRB_ECOBW</name>
<organism>
    <name type="scientific">Escherichia coli (strain K12 / MC4100 / BW2952)</name>
    <dbReference type="NCBI Taxonomy" id="595496"/>
    <lineage>
        <taxon>Bacteria</taxon>
        <taxon>Pseudomonadati</taxon>
        <taxon>Pseudomonadota</taxon>
        <taxon>Gammaproteobacteria</taxon>
        <taxon>Enterobacterales</taxon>
        <taxon>Enterobacteriaceae</taxon>
        <taxon>Escherichia</taxon>
    </lineage>
</organism>